<proteinExistence type="inferred from homology"/>
<keyword id="KW-0067">ATP-binding</keyword>
<keyword id="KW-0997">Cell inner membrane</keyword>
<keyword id="KW-1003">Cell membrane</keyword>
<keyword id="KW-0418">Kinase</keyword>
<keyword id="KW-0472">Membrane</keyword>
<keyword id="KW-0547">Nucleotide-binding</keyword>
<keyword id="KW-0808">Transferase</keyword>
<keyword id="KW-0812">Transmembrane</keyword>
<keyword id="KW-1133">Transmembrane helix</keyword>
<keyword id="KW-0831">Ubiquinone biosynthesis</keyword>
<comment type="function">
    <text evidence="1">Is probably a protein kinase regulator of UbiI activity which is involved in aerobic coenzyme Q (ubiquinone) biosynthesis.</text>
</comment>
<comment type="pathway">
    <text>Cofactor biosynthesis; ubiquinone biosynthesis [regulation].</text>
</comment>
<comment type="subcellular location">
    <subcellularLocation>
        <location evidence="1">Cell inner membrane</location>
        <topology evidence="1">Multi-pass membrane protein</topology>
    </subcellularLocation>
</comment>
<comment type="similarity">
    <text evidence="1">Belongs to the ABC1 family. UbiB subfamily.</text>
</comment>
<name>UBIB_SODGM</name>
<reference key="1">
    <citation type="journal article" date="2006" name="Genome Res.">
        <title>Massive genome erosion and functional adaptations provide insights into the symbiotic lifestyle of Sodalis glossinidius in the tsetse host.</title>
        <authorList>
            <person name="Toh H."/>
            <person name="Weiss B.L."/>
            <person name="Perkin S.A.H."/>
            <person name="Yamashita A."/>
            <person name="Oshima K."/>
            <person name="Hattori M."/>
            <person name="Aksoy S."/>
        </authorList>
    </citation>
    <scope>NUCLEOTIDE SEQUENCE [LARGE SCALE GENOMIC DNA]</scope>
    <source>
        <strain>morsitans</strain>
    </source>
</reference>
<organism>
    <name type="scientific">Sodalis glossinidius (strain morsitans)</name>
    <dbReference type="NCBI Taxonomy" id="343509"/>
    <lineage>
        <taxon>Bacteria</taxon>
        <taxon>Pseudomonadati</taxon>
        <taxon>Pseudomonadota</taxon>
        <taxon>Gammaproteobacteria</taxon>
        <taxon>Enterobacterales</taxon>
        <taxon>Bruguierivoracaceae</taxon>
        <taxon>Sodalis</taxon>
    </lineage>
</organism>
<accession>Q2NWT9</accession>
<evidence type="ECO:0000255" key="1">
    <source>
        <dbReference type="HAMAP-Rule" id="MF_00414"/>
    </source>
</evidence>
<sequence>MIFGELRRLYLIIGVMLSYGLDELIPKTRLTLPLRLGRNLLFWMPNNHAQRMLGERLRLALQELGPVWIKFGQMLSTRRDLFPPAIADQLAMLQDRVQPFDGALARAHIERSMGQPLETWFDDFQQEPLASASIAQVHTARLKNGQEVVIKVIRPDILPMIKADMRLMYRLASWVPHLLPDGRRLRPVEVVLEYEKTLLDELNLLREAANAIQLRRNFDGSPMLYIPEVYPDYCSETMMVMERIYGVPVNDVAALEKQGTNMKLLAERGVQVFFTQVFRDSFFHGDMHPGNIFVSFEHPENPQYIGIDCGIVGSLNKEDKRYLAENFIAFFNRDYRKVAELHVDSGWVPPDTNVEDFEFAIRTVCEPIFEKPLAEISFGHVLLNLFNTARRFNMEVQPQLVLLQKTLLYIEGVGRQLYPQLDLWKTAKPFLEEWIKDQMGLPAILRALKEKAPYWAEKLPELPELVYDGFKQHRLLQKSVDRLTVEMRVHHVRQSQSRFLFGIGATLLLIGTFLMTQGADEGSLPAWLMAAGTVSWIIGWKRTA</sequence>
<dbReference type="EC" id="2.7.-.-" evidence="1"/>
<dbReference type="EMBL" id="AP008232">
    <property type="protein sequence ID" value="BAE73386.1"/>
    <property type="molecule type" value="Genomic_DNA"/>
</dbReference>
<dbReference type="RefSeq" id="WP_011409976.1">
    <property type="nucleotide sequence ID" value="NC_007712.1"/>
</dbReference>
<dbReference type="SMR" id="Q2NWT9"/>
<dbReference type="STRING" id="343509.SG0111"/>
<dbReference type="KEGG" id="sgl:SG0111"/>
<dbReference type="eggNOG" id="COG0661">
    <property type="taxonomic scope" value="Bacteria"/>
</dbReference>
<dbReference type="HOGENOM" id="CLU_006533_0_0_6"/>
<dbReference type="OrthoDB" id="9795390at2"/>
<dbReference type="BioCyc" id="SGLO343509:SGP1_RS00960-MONOMER"/>
<dbReference type="UniPathway" id="UPA00232"/>
<dbReference type="Proteomes" id="UP000001932">
    <property type="component" value="Chromosome"/>
</dbReference>
<dbReference type="GO" id="GO:0005886">
    <property type="term" value="C:plasma membrane"/>
    <property type="evidence" value="ECO:0007669"/>
    <property type="project" value="UniProtKB-SubCell"/>
</dbReference>
<dbReference type="GO" id="GO:0005524">
    <property type="term" value="F:ATP binding"/>
    <property type="evidence" value="ECO:0007669"/>
    <property type="project" value="UniProtKB-KW"/>
</dbReference>
<dbReference type="GO" id="GO:0004672">
    <property type="term" value="F:protein kinase activity"/>
    <property type="evidence" value="ECO:0007669"/>
    <property type="project" value="UniProtKB-UniRule"/>
</dbReference>
<dbReference type="GO" id="GO:0010795">
    <property type="term" value="P:regulation of ubiquinone biosynthetic process"/>
    <property type="evidence" value="ECO:0007669"/>
    <property type="project" value="UniProtKB-UniRule"/>
</dbReference>
<dbReference type="GO" id="GO:0006744">
    <property type="term" value="P:ubiquinone biosynthetic process"/>
    <property type="evidence" value="ECO:0007669"/>
    <property type="project" value="UniProtKB-UniPathway"/>
</dbReference>
<dbReference type="CDD" id="cd13972">
    <property type="entry name" value="UbiB"/>
    <property type="match status" value="1"/>
</dbReference>
<dbReference type="HAMAP" id="MF_00414">
    <property type="entry name" value="UbiB"/>
    <property type="match status" value="1"/>
</dbReference>
<dbReference type="InterPro" id="IPR004147">
    <property type="entry name" value="ABC1_dom"/>
</dbReference>
<dbReference type="InterPro" id="IPR011009">
    <property type="entry name" value="Kinase-like_dom_sf"/>
</dbReference>
<dbReference type="InterPro" id="IPR010232">
    <property type="entry name" value="UbiB"/>
</dbReference>
<dbReference type="InterPro" id="IPR045308">
    <property type="entry name" value="UbiB_bact"/>
</dbReference>
<dbReference type="InterPro" id="IPR050154">
    <property type="entry name" value="UbiB_kinase"/>
</dbReference>
<dbReference type="NCBIfam" id="NF003404">
    <property type="entry name" value="PRK04750.1"/>
    <property type="match status" value="1"/>
</dbReference>
<dbReference type="NCBIfam" id="TIGR01982">
    <property type="entry name" value="UbiB"/>
    <property type="match status" value="1"/>
</dbReference>
<dbReference type="PANTHER" id="PTHR10566">
    <property type="entry name" value="CHAPERONE-ACTIVITY OF BC1 COMPLEX CABC1 -RELATED"/>
    <property type="match status" value="1"/>
</dbReference>
<dbReference type="PANTHER" id="PTHR10566:SF113">
    <property type="entry name" value="PROTEIN ACTIVITY OF BC1 COMPLEX KINASE 7, CHLOROPLASTIC"/>
    <property type="match status" value="1"/>
</dbReference>
<dbReference type="Pfam" id="PF03109">
    <property type="entry name" value="ABC1"/>
    <property type="match status" value="1"/>
</dbReference>
<dbReference type="SUPFAM" id="SSF56112">
    <property type="entry name" value="Protein kinase-like (PK-like)"/>
    <property type="match status" value="1"/>
</dbReference>
<feature type="chain" id="PRO_1000050068" description="Probable protein kinase UbiB">
    <location>
        <begin position="1"/>
        <end position="544"/>
    </location>
</feature>
<feature type="transmembrane region" description="Helical" evidence="1">
    <location>
        <begin position="1"/>
        <end position="21"/>
    </location>
</feature>
<feature type="transmembrane region" description="Helical" evidence="1">
    <location>
        <begin position="499"/>
        <end position="519"/>
    </location>
</feature>
<feature type="transmembrane region" description="Helical" evidence="1">
    <location>
        <begin position="520"/>
        <end position="540"/>
    </location>
</feature>
<feature type="domain" description="Protein kinase" evidence="1">
    <location>
        <begin position="123"/>
        <end position="500"/>
    </location>
</feature>
<feature type="active site" description="Proton acceptor" evidence="1">
    <location>
        <position position="286"/>
    </location>
</feature>
<feature type="binding site" evidence="1">
    <location>
        <begin position="129"/>
        <end position="137"/>
    </location>
    <ligand>
        <name>ATP</name>
        <dbReference type="ChEBI" id="CHEBI:30616"/>
    </ligand>
</feature>
<feature type="binding site" evidence="1">
    <location>
        <position position="151"/>
    </location>
    <ligand>
        <name>ATP</name>
        <dbReference type="ChEBI" id="CHEBI:30616"/>
    </ligand>
</feature>
<gene>
    <name evidence="1" type="primary">ubiB</name>
    <name type="ordered locus">SG0111</name>
</gene>
<protein>
    <recommendedName>
        <fullName evidence="1">Probable protein kinase UbiB</fullName>
        <ecNumber evidence="1">2.7.-.-</ecNumber>
    </recommendedName>
    <alternativeName>
        <fullName evidence="1">Ubiquinone biosynthesis protein UbiB</fullName>
    </alternativeName>
</protein>